<evidence type="ECO:0000250" key="1">
    <source>
        <dbReference type="UniProtKB" id="Q08752"/>
    </source>
</evidence>
<evidence type="ECO:0000250" key="2">
    <source>
        <dbReference type="UniProtKB" id="Q09928"/>
    </source>
</evidence>
<evidence type="ECO:0000250" key="3">
    <source>
        <dbReference type="UniProtKB" id="Q13356"/>
    </source>
</evidence>
<evidence type="ECO:0000255" key="4">
    <source>
        <dbReference type="PROSITE-ProRule" id="PRU00156"/>
    </source>
</evidence>
<evidence type="ECO:0000256" key="5">
    <source>
        <dbReference type="SAM" id="MobiDB-lite"/>
    </source>
</evidence>
<evidence type="ECO:0000305" key="6"/>
<sequence length="597" mass="65801">MGKGTDKLYITHSEWSSSDAYGASTGANAGARAQRRGASFKKLPFNFCAASLQPFKNPVCTPDGTIFDVEVIGSWLEKHKTNPVTGEPLSAKDLIKLNFARNGDTTDSDENKGDLIDPVTFKVFTDNTHIVAIRHGSYANVFAWETVERMNIKPKMWRDLVDDEEFGRRDIITLQDPQNVSASRDLSQFKYLQDGQDAILTKEQEEERKGGTVNIEALGRVGEKVLRAKEAVERARAARQAGGADVNRLTQALTTTSTNSATNNNKTAIARGQSLIQERKRPANAATYTTGLTAASFTSTGLTPSTSGSLALLSDEQYLLKPSHRIKNKGYVRMETNLGPLTLELLPEFAPKAVWNFLRLSEKGYYRDVAFHRSIRNFMIQGGDPSGTGRGGSSIWGKNFEDEFEGPNTHSARGIVSMANKGKNTNSSQFFITYRPASHLDRKHTIFAKVIEGQDTTLTAMENVATDGSDRPLNKIVIKDMIILIDPFAEWMKEKKQKEGEEERKREVARQGGTEDDRTTWTGKRIRADGTMEGQGMGEGGGGGPKVGKYLDVGAVKKAATTTTTTTRKAEEEEVDTWEEPVRKKAKMGGFGNFDGW</sequence>
<accession>Q7RXA6</accession>
<name>PPIL2_NEUCR</name>
<feature type="chain" id="PRO_0000232987" description="Peptidyl-prolyl cis-trans isomerase-like 2">
    <location>
        <begin position="1"/>
        <end position="597"/>
    </location>
</feature>
<feature type="domain" description="U-box">
    <location>
        <begin position="41"/>
        <end position="114"/>
    </location>
</feature>
<feature type="domain" description="PPIase cyclophilin-type" evidence="4">
    <location>
        <begin position="328"/>
        <end position="483"/>
    </location>
</feature>
<feature type="region of interest" description="Disordered" evidence="5">
    <location>
        <begin position="495"/>
        <end position="521"/>
    </location>
</feature>
<feature type="region of interest" description="Disordered" evidence="5">
    <location>
        <begin position="560"/>
        <end position="597"/>
    </location>
</feature>
<feature type="compositionally biased region" description="Basic and acidic residues" evidence="5">
    <location>
        <begin position="495"/>
        <end position="519"/>
    </location>
</feature>
<protein>
    <recommendedName>
        <fullName evidence="6">Peptidyl-prolyl cis-trans isomerase-like 2</fullName>
        <shortName>PPIase</shortName>
        <ecNumber evidence="3">2.3.2.27</ecNumber>
        <ecNumber evidence="1">5.2.1.8</ecNumber>
    </recommendedName>
    <alternativeName>
        <fullName>Cyclophilin-60</fullName>
    </alternativeName>
    <alternativeName>
        <fullName>Cyclophilin-like protein Cyp-60</fullName>
    </alternativeName>
    <alternativeName>
        <fullName evidence="6">RING-type E3 ubiquitin transferase isomerase-like 2</fullName>
    </alternativeName>
    <alternativeName>
        <fullName>Rotamase</fullName>
    </alternativeName>
</protein>
<organism>
    <name type="scientific">Neurospora crassa (strain ATCC 24698 / 74-OR23-1A / CBS 708.71 / DSM 1257 / FGSC 987)</name>
    <dbReference type="NCBI Taxonomy" id="367110"/>
    <lineage>
        <taxon>Eukaryota</taxon>
        <taxon>Fungi</taxon>
        <taxon>Dikarya</taxon>
        <taxon>Ascomycota</taxon>
        <taxon>Pezizomycotina</taxon>
        <taxon>Sordariomycetes</taxon>
        <taxon>Sordariomycetidae</taxon>
        <taxon>Sordariales</taxon>
        <taxon>Sordariaceae</taxon>
        <taxon>Neurospora</taxon>
    </lineage>
</organism>
<proteinExistence type="inferred from homology"/>
<reference key="1">
    <citation type="journal article" date="2003" name="Nature">
        <title>The genome sequence of the filamentous fungus Neurospora crassa.</title>
        <authorList>
            <person name="Galagan J.E."/>
            <person name="Calvo S.E."/>
            <person name="Borkovich K.A."/>
            <person name="Selker E.U."/>
            <person name="Read N.D."/>
            <person name="Jaffe D.B."/>
            <person name="FitzHugh W."/>
            <person name="Ma L.-J."/>
            <person name="Smirnov S."/>
            <person name="Purcell S."/>
            <person name="Rehman B."/>
            <person name="Elkins T."/>
            <person name="Engels R."/>
            <person name="Wang S."/>
            <person name="Nielsen C.B."/>
            <person name="Butler J."/>
            <person name="Endrizzi M."/>
            <person name="Qui D."/>
            <person name="Ianakiev P."/>
            <person name="Bell-Pedersen D."/>
            <person name="Nelson M.A."/>
            <person name="Werner-Washburne M."/>
            <person name="Selitrennikoff C.P."/>
            <person name="Kinsey J.A."/>
            <person name="Braun E.L."/>
            <person name="Zelter A."/>
            <person name="Schulte U."/>
            <person name="Kothe G.O."/>
            <person name="Jedd G."/>
            <person name="Mewes H.-W."/>
            <person name="Staben C."/>
            <person name="Marcotte E."/>
            <person name="Greenberg D."/>
            <person name="Roy A."/>
            <person name="Foley K."/>
            <person name="Naylor J."/>
            <person name="Stange-Thomann N."/>
            <person name="Barrett R."/>
            <person name="Gnerre S."/>
            <person name="Kamal M."/>
            <person name="Kamvysselis M."/>
            <person name="Mauceli E.W."/>
            <person name="Bielke C."/>
            <person name="Rudd S."/>
            <person name="Frishman D."/>
            <person name="Krystofova S."/>
            <person name="Rasmussen C."/>
            <person name="Metzenberg R.L."/>
            <person name="Perkins D.D."/>
            <person name="Kroken S."/>
            <person name="Cogoni C."/>
            <person name="Macino G."/>
            <person name="Catcheside D.E.A."/>
            <person name="Li W."/>
            <person name="Pratt R.J."/>
            <person name="Osmani S.A."/>
            <person name="DeSouza C.P.C."/>
            <person name="Glass N.L."/>
            <person name="Orbach M.J."/>
            <person name="Berglund J.A."/>
            <person name="Voelker R."/>
            <person name="Yarden O."/>
            <person name="Plamann M."/>
            <person name="Seiler S."/>
            <person name="Dunlap J.C."/>
            <person name="Radford A."/>
            <person name="Aramayo R."/>
            <person name="Natvig D.O."/>
            <person name="Alex L.A."/>
            <person name="Mannhaupt G."/>
            <person name="Ebbole D.J."/>
            <person name="Freitag M."/>
            <person name="Paulsen I."/>
            <person name="Sachs M.S."/>
            <person name="Lander E.S."/>
            <person name="Nusbaum C."/>
            <person name="Birren B.W."/>
        </authorList>
    </citation>
    <scope>NUCLEOTIDE SEQUENCE [LARGE SCALE GENOMIC DNA]</scope>
    <source>
        <strain>ATCC 24698 / 74-OR23-1A / CBS 708.71 / DSM 1257 / FGSC 987</strain>
    </source>
</reference>
<comment type="function">
    <text evidence="1 3">May catalyze the cis-trans isomerization of proline imidic peptide bonds in oligopeptides thereby assisting the folding of proteins. May also function as a chaperone, playing a role in intracellular transport of proteins. May also have a protein ubiquitin ligase activity acting as an E3 ubiquitin protein ligase or as a ubiquitin-ubiquitin ligase promoting elongation of ubiquitin chains on proteins.</text>
</comment>
<comment type="catalytic activity">
    <reaction>
        <text>[protein]-peptidylproline (omega=180) = [protein]-peptidylproline (omega=0)</text>
        <dbReference type="Rhea" id="RHEA:16237"/>
        <dbReference type="Rhea" id="RHEA-COMP:10747"/>
        <dbReference type="Rhea" id="RHEA-COMP:10748"/>
        <dbReference type="ChEBI" id="CHEBI:83833"/>
        <dbReference type="ChEBI" id="CHEBI:83834"/>
        <dbReference type="EC" id="5.2.1.8"/>
    </reaction>
</comment>
<comment type="catalytic activity">
    <reaction evidence="3">
        <text>S-ubiquitinyl-[E2 ubiquitin-conjugating enzyme]-L-cysteine + [acceptor protein]-L-lysine = [E2 ubiquitin-conjugating enzyme]-L-cysteine + N(6)-ubiquitinyl-[acceptor protein]-L-lysine.</text>
        <dbReference type="EC" id="2.3.2.27"/>
    </reaction>
</comment>
<comment type="pathway">
    <text evidence="3">Protein modification; protein ubiquitination.</text>
</comment>
<comment type="subcellular location">
    <subcellularLocation>
        <location evidence="2 3">Nucleus</location>
    </subcellularLocation>
</comment>
<comment type="similarity">
    <text evidence="6">Belongs to the cyclophilin-type PPIase family. PPIL2 subfamily.</text>
</comment>
<dbReference type="EC" id="2.3.2.27" evidence="3"/>
<dbReference type="EC" id="5.2.1.8" evidence="1"/>
<dbReference type="EMBL" id="CM002238">
    <property type="protein sequence ID" value="EAA27168.1"/>
    <property type="molecule type" value="Genomic_DNA"/>
</dbReference>
<dbReference type="RefSeq" id="XP_956404.1">
    <property type="nucleotide sequence ID" value="XM_951311.2"/>
</dbReference>
<dbReference type="SMR" id="Q7RXA6"/>
<dbReference type="STRING" id="367110.Q7RXA6"/>
<dbReference type="PaxDb" id="5141-EFNCRP00000000156"/>
<dbReference type="EnsemblFungi" id="EAA27168">
    <property type="protein sequence ID" value="EAA27168"/>
    <property type="gene ID" value="NCU00181"/>
</dbReference>
<dbReference type="GeneID" id="3872544"/>
<dbReference type="KEGG" id="ncr:NCU00181"/>
<dbReference type="VEuPathDB" id="FungiDB:NCU00181"/>
<dbReference type="HOGENOM" id="CLU_012062_7_0_1"/>
<dbReference type="InParanoid" id="Q7RXA6"/>
<dbReference type="OrthoDB" id="407558at2759"/>
<dbReference type="UniPathway" id="UPA00143"/>
<dbReference type="Proteomes" id="UP000001805">
    <property type="component" value="Chromosome 3, Linkage Group III"/>
</dbReference>
<dbReference type="GO" id="GO:0071013">
    <property type="term" value="C:catalytic step 2 spliceosome"/>
    <property type="evidence" value="ECO:0000318"/>
    <property type="project" value="GO_Central"/>
</dbReference>
<dbReference type="GO" id="GO:0003755">
    <property type="term" value="F:peptidyl-prolyl cis-trans isomerase activity"/>
    <property type="evidence" value="ECO:0007669"/>
    <property type="project" value="UniProtKB-KW"/>
</dbReference>
<dbReference type="GO" id="GO:0061630">
    <property type="term" value="F:ubiquitin protein ligase activity"/>
    <property type="evidence" value="ECO:0000318"/>
    <property type="project" value="GO_Central"/>
</dbReference>
<dbReference type="GO" id="GO:0006457">
    <property type="term" value="P:protein folding"/>
    <property type="evidence" value="ECO:0000318"/>
    <property type="project" value="GO_Central"/>
</dbReference>
<dbReference type="GO" id="GO:0016567">
    <property type="term" value="P:protein ubiquitination"/>
    <property type="evidence" value="ECO:0007669"/>
    <property type="project" value="UniProtKB-UniPathway"/>
</dbReference>
<dbReference type="CDD" id="cd01923">
    <property type="entry name" value="cyclophilin_RING"/>
    <property type="match status" value="1"/>
</dbReference>
<dbReference type="CDD" id="cd16663">
    <property type="entry name" value="RING-Ubox_PPIL2"/>
    <property type="match status" value="1"/>
</dbReference>
<dbReference type="FunFam" id="3.30.40.10:FF:000079">
    <property type="entry name" value="Peptidyl-prolyl cis-trans isomerase 2"/>
    <property type="match status" value="1"/>
</dbReference>
<dbReference type="FunFam" id="2.40.100.10:FF:000014">
    <property type="entry name" value="Peptidyl-prolyl cis-trans isomerase cyp65"/>
    <property type="match status" value="1"/>
</dbReference>
<dbReference type="Gene3D" id="2.40.100.10">
    <property type="entry name" value="Cyclophilin-like"/>
    <property type="match status" value="1"/>
</dbReference>
<dbReference type="Gene3D" id="3.30.40.10">
    <property type="entry name" value="Zinc/RING finger domain, C3HC4 (zinc finger)"/>
    <property type="match status" value="1"/>
</dbReference>
<dbReference type="InterPro" id="IPR029000">
    <property type="entry name" value="Cyclophilin-like_dom_sf"/>
</dbReference>
<dbReference type="InterPro" id="IPR020892">
    <property type="entry name" value="Cyclophilin-type_PPIase_CS"/>
</dbReference>
<dbReference type="InterPro" id="IPR002130">
    <property type="entry name" value="Cyclophilin-type_PPIase_dom"/>
</dbReference>
<dbReference type="InterPro" id="IPR044666">
    <property type="entry name" value="Cyclophilin_A-like"/>
</dbReference>
<dbReference type="InterPro" id="IPR026951">
    <property type="entry name" value="PPIL2_U-box_dom"/>
</dbReference>
<dbReference type="InterPro" id="IPR003613">
    <property type="entry name" value="Ubox_domain"/>
</dbReference>
<dbReference type="InterPro" id="IPR013083">
    <property type="entry name" value="Znf_RING/FYVE/PHD"/>
</dbReference>
<dbReference type="PANTHER" id="PTHR45625">
    <property type="entry name" value="PEPTIDYL-PROLYL CIS-TRANS ISOMERASE-RELATED"/>
    <property type="match status" value="1"/>
</dbReference>
<dbReference type="PANTHER" id="PTHR45625:SF1">
    <property type="entry name" value="RING-TYPE E3 UBIQUITIN-PROTEIN LIGASE PPIL2"/>
    <property type="match status" value="1"/>
</dbReference>
<dbReference type="Pfam" id="PF00160">
    <property type="entry name" value="Pro_isomerase"/>
    <property type="match status" value="1"/>
</dbReference>
<dbReference type="Pfam" id="PF04564">
    <property type="entry name" value="U-box"/>
    <property type="match status" value="1"/>
</dbReference>
<dbReference type="PRINTS" id="PR00153">
    <property type="entry name" value="CSAPPISMRASE"/>
</dbReference>
<dbReference type="SMART" id="SM00504">
    <property type="entry name" value="Ubox"/>
    <property type="match status" value="1"/>
</dbReference>
<dbReference type="SUPFAM" id="SSF50891">
    <property type="entry name" value="Cyclophilin-like"/>
    <property type="match status" value="1"/>
</dbReference>
<dbReference type="SUPFAM" id="SSF57850">
    <property type="entry name" value="RING/U-box"/>
    <property type="match status" value="1"/>
</dbReference>
<dbReference type="PROSITE" id="PS00170">
    <property type="entry name" value="CSA_PPIASE_1"/>
    <property type="match status" value="1"/>
</dbReference>
<dbReference type="PROSITE" id="PS50072">
    <property type="entry name" value="CSA_PPIASE_2"/>
    <property type="match status" value="1"/>
</dbReference>
<dbReference type="PROSITE" id="PS51698">
    <property type="entry name" value="U_BOX"/>
    <property type="match status" value="1"/>
</dbReference>
<gene>
    <name type="primary">ppi-2</name>
    <name type="synonym">cyp6</name>
    <name type="ORF">NCU00181</name>
</gene>
<keyword id="KW-0413">Isomerase</keyword>
<keyword id="KW-0539">Nucleus</keyword>
<keyword id="KW-1185">Reference proteome</keyword>
<keyword id="KW-0697">Rotamase</keyword>
<keyword id="KW-0808">Transferase</keyword>
<keyword id="KW-0833">Ubl conjugation pathway</keyword>